<proteinExistence type="evidence at transcript level"/>
<evidence type="ECO:0000250" key="1">
    <source>
        <dbReference type="UniProtKB" id="P02086"/>
    </source>
</evidence>
<evidence type="ECO:0000250" key="2">
    <source>
        <dbReference type="UniProtKB" id="P68871"/>
    </source>
</evidence>
<evidence type="ECO:0000255" key="3">
    <source>
        <dbReference type="PROSITE-ProRule" id="PRU00238"/>
    </source>
</evidence>
<protein>
    <recommendedName>
        <fullName>Hemoglobin subunit beta</fullName>
    </recommendedName>
    <alternativeName>
        <fullName>Beta-globin</fullName>
    </alternativeName>
    <alternativeName>
        <fullName>Hemoglobin beta chain</fullName>
    </alternativeName>
</protein>
<organism>
    <name type="scientific">Callithrix jacchus</name>
    <name type="common">White-tufted-ear marmoset</name>
    <dbReference type="NCBI Taxonomy" id="9483"/>
    <lineage>
        <taxon>Eukaryota</taxon>
        <taxon>Metazoa</taxon>
        <taxon>Chordata</taxon>
        <taxon>Craniata</taxon>
        <taxon>Vertebrata</taxon>
        <taxon>Euteleostomi</taxon>
        <taxon>Mammalia</taxon>
        <taxon>Eutheria</taxon>
        <taxon>Euarchontoglires</taxon>
        <taxon>Primates</taxon>
        <taxon>Haplorrhini</taxon>
        <taxon>Platyrrhini</taxon>
        <taxon>Cebidae</taxon>
        <taxon>Callitrichinae</taxon>
        <taxon>Callithrix</taxon>
        <taxon>Callithrix</taxon>
    </lineage>
</organism>
<reference key="1">
    <citation type="submission" date="2003-04" db="EMBL/GenBank/DDBJ databases">
        <title>The molecular evolution of the primate beta globin gene: an evaluation of gene conversion and phylogeny and an analysis of phylogenetic footprints in noncoding DNA.</title>
        <authorList>
            <person name="Prychitko T.M."/>
            <person name="Goodman M."/>
            <person name="Johnson R.M."/>
        </authorList>
    </citation>
    <scope>NUCLEOTIDE SEQUENCE [GENOMIC DNA]</scope>
</reference>
<reference key="2">
    <citation type="submission" date="2008-02" db="EMBL/GenBank/DDBJ databases">
        <title>NISC comparative sequencing initiative.</title>
        <authorList>
            <person name="Antonellis A."/>
            <person name="Benjamin B."/>
            <person name="Blakesley R.W."/>
            <person name="Bouffard G.G."/>
            <person name="Brinkley C."/>
            <person name="Brooks S."/>
            <person name="Chu G."/>
            <person name="Chub I."/>
            <person name="Coleman H."/>
            <person name="Fuksenko T."/>
            <person name="Gestole M."/>
            <person name="Gregory M."/>
            <person name="Guan X."/>
            <person name="Gupta J."/>
            <person name="Gurson N."/>
            <person name="Han E."/>
            <person name="Han J."/>
            <person name="Hansen N."/>
            <person name="Hargrove A."/>
            <person name="Hines-Harris K."/>
            <person name="Ho S.-L."/>
            <person name="Hu P."/>
            <person name="Hunter G."/>
            <person name="Hurle B."/>
            <person name="Idol J.R."/>
            <person name="Johnson T."/>
            <person name="Knight E."/>
            <person name="Kwong P."/>
            <person name="Lee-Lin S.-Q."/>
            <person name="Legaspi R."/>
            <person name="Madden M."/>
            <person name="Maduro Q.L."/>
            <person name="Maduro V.B."/>
            <person name="Margulies E.H."/>
            <person name="Masiello C."/>
            <person name="Maskeri B."/>
            <person name="McDowell J."/>
            <person name="Merkulov G."/>
            <person name="Montemayor C."/>
            <person name="Mullikin J.C."/>
            <person name="Park M."/>
            <person name="Prasad A."/>
            <person name="Ramsahoye C."/>
            <person name="Reddix-Dugue N."/>
            <person name="Riebow N."/>
            <person name="Schandler K."/>
            <person name="Schueler M.G."/>
            <person name="Sison C."/>
            <person name="Smith L."/>
            <person name="Stantripop S."/>
            <person name="Thomas J.W."/>
            <person name="Thomas P.J."/>
            <person name="Tsipouri V."/>
            <person name="Young A."/>
            <person name="Green E.D."/>
        </authorList>
    </citation>
    <scope>NUCLEOTIDE SEQUENCE [LARGE SCALE GENOMIC DNA]</scope>
</reference>
<name>HBB_CALJA</name>
<gene>
    <name type="primary">HBB</name>
</gene>
<dbReference type="EMBL" id="AY279111">
    <property type="protein sequence ID" value="AAQ18219.1"/>
    <property type="molecule type" value="Genomic_DNA"/>
</dbReference>
<dbReference type="EMBL" id="DP000589">
    <property type="protein sequence ID" value="ABZ80298.1"/>
    <property type="molecule type" value="Genomic_DNA"/>
</dbReference>
<dbReference type="SMR" id="Q6WN28"/>
<dbReference type="FunCoup" id="Q6WN28">
    <property type="interactions" value="31"/>
</dbReference>
<dbReference type="STRING" id="9483.ENSCJAP00000077496"/>
<dbReference type="Ensembl" id="ENSCJAT00000039700.5">
    <property type="protein sequence ID" value="ENSCJAP00000037583.4"/>
    <property type="gene ID" value="ENSCJAG00000020214.5"/>
</dbReference>
<dbReference type="GeneID" id="100410611"/>
<dbReference type="KEGG" id="cjc:100410611"/>
<dbReference type="eggNOG" id="KOG3378">
    <property type="taxonomic scope" value="Eukaryota"/>
</dbReference>
<dbReference type="GeneTree" id="ENSGT00940000163476"/>
<dbReference type="HOGENOM" id="CLU_003827_10_0_1"/>
<dbReference type="InParanoid" id="Q6WN28"/>
<dbReference type="OrthoDB" id="9886081at2759"/>
<dbReference type="Proteomes" id="UP000008225">
    <property type="component" value="Chromosome 11"/>
</dbReference>
<dbReference type="Bgee" id="ENSCJAG00000020214">
    <property type="expression patterns" value="Expressed in heart and 6 other cell types or tissues"/>
</dbReference>
<dbReference type="GO" id="GO:0072562">
    <property type="term" value="C:blood microparticle"/>
    <property type="evidence" value="ECO:0007669"/>
    <property type="project" value="TreeGrafter"/>
</dbReference>
<dbReference type="GO" id="GO:0031838">
    <property type="term" value="C:haptoglobin-hemoglobin complex"/>
    <property type="evidence" value="ECO:0007669"/>
    <property type="project" value="TreeGrafter"/>
</dbReference>
<dbReference type="GO" id="GO:0005833">
    <property type="term" value="C:hemoglobin complex"/>
    <property type="evidence" value="ECO:0007669"/>
    <property type="project" value="InterPro"/>
</dbReference>
<dbReference type="GO" id="GO:0031720">
    <property type="term" value="F:haptoglobin binding"/>
    <property type="evidence" value="ECO:0007669"/>
    <property type="project" value="TreeGrafter"/>
</dbReference>
<dbReference type="GO" id="GO:0020037">
    <property type="term" value="F:heme binding"/>
    <property type="evidence" value="ECO:0007669"/>
    <property type="project" value="InterPro"/>
</dbReference>
<dbReference type="GO" id="GO:0031721">
    <property type="term" value="F:hemoglobin alpha binding"/>
    <property type="evidence" value="ECO:0007669"/>
    <property type="project" value="TreeGrafter"/>
</dbReference>
<dbReference type="GO" id="GO:0046872">
    <property type="term" value="F:metal ion binding"/>
    <property type="evidence" value="ECO:0007669"/>
    <property type="project" value="UniProtKB-KW"/>
</dbReference>
<dbReference type="GO" id="GO:0043177">
    <property type="term" value="F:organic acid binding"/>
    <property type="evidence" value="ECO:0007669"/>
    <property type="project" value="TreeGrafter"/>
</dbReference>
<dbReference type="GO" id="GO:0019825">
    <property type="term" value="F:oxygen binding"/>
    <property type="evidence" value="ECO:0007669"/>
    <property type="project" value="InterPro"/>
</dbReference>
<dbReference type="GO" id="GO:0005344">
    <property type="term" value="F:oxygen carrier activity"/>
    <property type="evidence" value="ECO:0007669"/>
    <property type="project" value="UniProtKB-KW"/>
</dbReference>
<dbReference type="GO" id="GO:0004601">
    <property type="term" value="F:peroxidase activity"/>
    <property type="evidence" value="ECO:0007669"/>
    <property type="project" value="TreeGrafter"/>
</dbReference>
<dbReference type="GO" id="GO:0042744">
    <property type="term" value="P:hydrogen peroxide catabolic process"/>
    <property type="evidence" value="ECO:0007669"/>
    <property type="project" value="TreeGrafter"/>
</dbReference>
<dbReference type="CDD" id="cd08925">
    <property type="entry name" value="Hb-beta-like"/>
    <property type="match status" value="1"/>
</dbReference>
<dbReference type="FunFam" id="1.10.490.10:FF:000001">
    <property type="entry name" value="Hemoglobin subunit beta"/>
    <property type="match status" value="1"/>
</dbReference>
<dbReference type="Gene3D" id="1.10.490.10">
    <property type="entry name" value="Globins"/>
    <property type="match status" value="1"/>
</dbReference>
<dbReference type="InterPro" id="IPR000971">
    <property type="entry name" value="Globin"/>
</dbReference>
<dbReference type="InterPro" id="IPR009050">
    <property type="entry name" value="Globin-like_sf"/>
</dbReference>
<dbReference type="InterPro" id="IPR012292">
    <property type="entry name" value="Globin/Proto"/>
</dbReference>
<dbReference type="InterPro" id="IPR002337">
    <property type="entry name" value="Hemoglobin_b"/>
</dbReference>
<dbReference type="InterPro" id="IPR050056">
    <property type="entry name" value="Hemoglobin_oxygen_transport"/>
</dbReference>
<dbReference type="PANTHER" id="PTHR11442">
    <property type="entry name" value="HEMOGLOBIN FAMILY MEMBER"/>
    <property type="match status" value="1"/>
</dbReference>
<dbReference type="PANTHER" id="PTHR11442:SF42">
    <property type="entry name" value="HEMOGLOBIN SUBUNIT BETA"/>
    <property type="match status" value="1"/>
</dbReference>
<dbReference type="Pfam" id="PF00042">
    <property type="entry name" value="Globin"/>
    <property type="match status" value="1"/>
</dbReference>
<dbReference type="PRINTS" id="PR00814">
    <property type="entry name" value="BETAHAEM"/>
</dbReference>
<dbReference type="SUPFAM" id="SSF46458">
    <property type="entry name" value="Globin-like"/>
    <property type="match status" value="1"/>
</dbReference>
<dbReference type="PROSITE" id="PS01033">
    <property type="entry name" value="GLOBIN"/>
    <property type="match status" value="1"/>
</dbReference>
<feature type="initiator methionine" description="Removed" evidence="1">
    <location>
        <position position="1"/>
    </location>
</feature>
<feature type="chain" id="PRO_0000052903" description="Hemoglobin subunit beta">
    <location>
        <begin position="2"/>
        <end position="147"/>
    </location>
</feature>
<feature type="domain" description="Globin" evidence="3">
    <location>
        <begin position="3"/>
        <end position="147"/>
    </location>
</feature>
<feature type="binding site" description="distal binding residue">
    <location>
        <position position="64"/>
    </location>
    <ligand>
        <name>heme b</name>
        <dbReference type="ChEBI" id="CHEBI:60344"/>
    </ligand>
    <ligandPart>
        <name>Fe</name>
        <dbReference type="ChEBI" id="CHEBI:18248"/>
    </ligandPart>
</feature>
<feature type="binding site" description="proximal binding residue">
    <location>
        <position position="93"/>
    </location>
    <ligand>
        <name>heme b</name>
        <dbReference type="ChEBI" id="CHEBI:60344"/>
    </ligand>
    <ligandPart>
        <name>Fe</name>
        <dbReference type="ChEBI" id="CHEBI:18248"/>
    </ligandPart>
</feature>
<feature type="modified residue" description="N-acetylvaline" evidence="1">
    <location>
        <position position="2"/>
    </location>
</feature>
<feature type="modified residue" description="Phosphothreonine" evidence="2">
    <location>
        <position position="13"/>
    </location>
</feature>
<feature type="modified residue" description="Phosphoserine" evidence="2">
    <location>
        <position position="45"/>
    </location>
</feature>
<feature type="modified residue" description="N6-acetyllysine" evidence="2">
    <location>
        <position position="60"/>
    </location>
</feature>
<feature type="modified residue" description="N6-acetyllysine" evidence="2">
    <location>
        <position position="83"/>
    </location>
</feature>
<feature type="modified residue" description="S-nitrosocysteine" evidence="2">
    <location>
        <position position="94"/>
    </location>
</feature>
<feature type="modified residue" description="N6-acetyllysine" evidence="2">
    <location>
        <position position="145"/>
    </location>
</feature>
<keyword id="KW-0007">Acetylation</keyword>
<keyword id="KW-0349">Heme</keyword>
<keyword id="KW-0408">Iron</keyword>
<keyword id="KW-0479">Metal-binding</keyword>
<keyword id="KW-0561">Oxygen transport</keyword>
<keyword id="KW-0597">Phosphoprotein</keyword>
<keyword id="KW-1185">Reference proteome</keyword>
<keyword id="KW-0702">S-nitrosylation</keyword>
<keyword id="KW-0813">Transport</keyword>
<comment type="function">
    <text>Involved in oxygen transport from the lung to the various peripheral tissues.</text>
</comment>
<comment type="subunit">
    <text>Heterotetramer of two alpha chains and two beta chains.</text>
</comment>
<comment type="tissue specificity">
    <text>Red blood cells.</text>
</comment>
<comment type="similarity">
    <text evidence="3">Belongs to the globin family.</text>
</comment>
<sequence length="147" mass="16083">MVHLTGEEKSAVTALWGKVNVDEVGGEALGRLLVVYPWTQRFFESFGDLSTPDAVMNNPKVKAHGKKVLGAFSDGLTHLDNLKGTFAHLSELHCDKLHVDPENFRLLGNVLVCVLAHHFGKEFTPVVQAAYQKVVAGVANALAHKYH</sequence>
<accession>Q6WN28</accession>
<accession>B0VXB3</accession>